<comment type="function">
    <text evidence="1">Involved in glycosylation steps downstream of mono-O-methyl-glycosyl-p-hydroxybenzoic acid derivative (p-HBAD I) and 2-O-methyl-rhamnosyl-phenolphthiocerol dimycocerosate (mycoside B) during the p-hydroxybenzoic acid derivatives (p-HBAD) and glycosylated phenolphthiocerol dimycocerosates (PGL) biosynthesis.</text>
</comment>
<comment type="miscellaneous">
    <text>Was identified as a high-confidence drug target.</text>
</comment>
<comment type="similarity">
    <text evidence="2">Belongs to the glycosyltransferase 2 family.</text>
</comment>
<comment type="sequence caution" evidence="2">
    <conflict type="erroneous initiation">
        <sequence resource="EMBL-CDS" id="AAA50938"/>
    </conflict>
</comment>
<comment type="sequence caution" evidence="2">
    <conflict type="erroneous initiation">
        <sequence resource="EMBL-CDS" id="CCP45761"/>
    </conflict>
    <text>Extended N-terminus.</text>
</comment>
<name>GLTR1_MYCTU</name>
<keyword id="KW-0328">Glycosyltransferase</keyword>
<keyword id="KW-1185">Reference proteome</keyword>
<keyword id="KW-0808">Transferase</keyword>
<gene>
    <name type="ordered locus">Rv2957</name>
    <name type="ORF">MTCY349.31c</name>
    <name type="ORF">u0002kc</name>
</gene>
<sequence length="256" mass="29013">MAAPMFSIIIPTLNVAAVLPACLDSIARQTCGDFELVLVDGGSTDETLDIANIFAPNLGERLIIHRDTDQGVYDAMNRGVDLATGTWLLFLGADDSLYEADTLARVAAFIGEHEPSDLVYGDVIMRSTNFRWGGAFDLDRLLFKRNICHQAIFYRRGLFGTIGPYNLRYRVLADWDFNIRCFSNPALVTRYMHVVVASYNEFGGLSNTIVDKEFLKRLPMSTRLGIRLVIVLVRRWPKVISRAMVMRTVISWRRRR</sequence>
<organism>
    <name type="scientific">Mycobacterium tuberculosis (strain ATCC 25618 / H37Rv)</name>
    <dbReference type="NCBI Taxonomy" id="83332"/>
    <lineage>
        <taxon>Bacteria</taxon>
        <taxon>Bacillati</taxon>
        <taxon>Actinomycetota</taxon>
        <taxon>Actinomycetes</taxon>
        <taxon>Mycobacteriales</taxon>
        <taxon>Mycobacteriaceae</taxon>
        <taxon>Mycobacterium</taxon>
        <taxon>Mycobacterium tuberculosis complex</taxon>
    </lineage>
</organism>
<dbReference type="EC" id="2.4.1.-"/>
<dbReference type="EMBL" id="U00024">
    <property type="protein sequence ID" value="AAA50938.1"/>
    <property type="status" value="ALT_INIT"/>
    <property type="molecule type" value="Genomic_DNA"/>
</dbReference>
<dbReference type="EMBL" id="AL123456">
    <property type="protein sequence ID" value="CCP45761.1"/>
    <property type="status" value="ALT_INIT"/>
    <property type="molecule type" value="Genomic_DNA"/>
</dbReference>
<dbReference type="PIR" id="B70670">
    <property type="entry name" value="B70670"/>
</dbReference>
<dbReference type="RefSeq" id="NP_217473.1">
    <property type="nucleotide sequence ID" value="NC_000962.3"/>
</dbReference>
<dbReference type="SMR" id="P9WMX7"/>
<dbReference type="STRING" id="83332.Rv2957"/>
<dbReference type="PaxDb" id="83332-Rv2957"/>
<dbReference type="DNASU" id="887258"/>
<dbReference type="GeneID" id="887258"/>
<dbReference type="KEGG" id="mtu:Rv2957"/>
<dbReference type="PATRIC" id="fig|83332.12.peg.3297"/>
<dbReference type="TubercuList" id="Rv2957"/>
<dbReference type="eggNOG" id="COG0463">
    <property type="taxonomic scope" value="Bacteria"/>
</dbReference>
<dbReference type="InParanoid" id="P9WMX7"/>
<dbReference type="OrthoDB" id="9788101at2"/>
<dbReference type="BioCyc" id="MetaCyc:G185E-7211-MONOMER"/>
<dbReference type="Proteomes" id="UP000001584">
    <property type="component" value="Chromosome"/>
</dbReference>
<dbReference type="GO" id="GO:0016020">
    <property type="term" value="C:membrane"/>
    <property type="evidence" value="ECO:0007669"/>
    <property type="project" value="GOC"/>
</dbReference>
<dbReference type="GO" id="GO:0016757">
    <property type="term" value="F:glycosyltransferase activity"/>
    <property type="evidence" value="ECO:0000318"/>
    <property type="project" value="GO_Central"/>
</dbReference>
<dbReference type="GO" id="GO:0016758">
    <property type="term" value="F:hexosyltransferase activity"/>
    <property type="evidence" value="ECO:0000314"/>
    <property type="project" value="MTBBASE"/>
</dbReference>
<dbReference type="GO" id="GO:0009247">
    <property type="term" value="P:glycolipid biosynthetic process"/>
    <property type="evidence" value="ECO:0000315"/>
    <property type="project" value="MTBBASE"/>
</dbReference>
<dbReference type="CDD" id="cd06433">
    <property type="entry name" value="GT_2_WfgS_like"/>
    <property type="match status" value="1"/>
</dbReference>
<dbReference type="Gene3D" id="3.90.550.10">
    <property type="entry name" value="Spore Coat Polysaccharide Biosynthesis Protein SpsA, Chain A"/>
    <property type="match status" value="1"/>
</dbReference>
<dbReference type="InterPro" id="IPR001173">
    <property type="entry name" value="Glyco_trans_2-like"/>
</dbReference>
<dbReference type="InterPro" id="IPR029044">
    <property type="entry name" value="Nucleotide-diphossugar_trans"/>
</dbReference>
<dbReference type="PANTHER" id="PTHR22916">
    <property type="entry name" value="GLYCOSYLTRANSFERASE"/>
    <property type="match status" value="1"/>
</dbReference>
<dbReference type="PANTHER" id="PTHR22916:SF3">
    <property type="entry name" value="UDP-GLCNAC:BETAGAL BETA-1,3-N-ACETYLGLUCOSAMINYLTRANSFERASE-LIKE PROTEIN 1"/>
    <property type="match status" value="1"/>
</dbReference>
<dbReference type="Pfam" id="PF00535">
    <property type="entry name" value="Glycos_transf_2"/>
    <property type="match status" value="1"/>
</dbReference>
<dbReference type="SUPFAM" id="SSF53448">
    <property type="entry name" value="Nucleotide-diphospho-sugar transferases"/>
    <property type="match status" value="1"/>
</dbReference>
<accession>P9WMX7</accession>
<accession>L0TBD5</accession>
<accession>P0A599</accession>
<accession>Q50459</accession>
<feature type="chain" id="PRO_0000059251" description="PGL/p-HBAD biosynthesis glycosyltransferase Rv2957">
    <location>
        <begin position="1"/>
        <end position="256"/>
    </location>
</feature>
<protein>
    <recommendedName>
        <fullName>PGL/p-HBAD biosynthesis glycosyltransferase Rv2957</fullName>
        <ecNumber>2.4.1.-</ecNumber>
    </recommendedName>
</protein>
<proteinExistence type="evidence at protein level"/>
<reference key="1">
    <citation type="submission" date="1994-09" db="EMBL/GenBank/DDBJ databases">
        <authorList>
            <person name="Smith D.R."/>
            <person name="Robison K."/>
        </authorList>
    </citation>
    <scope>NUCLEOTIDE SEQUENCE [GENOMIC DNA]</scope>
</reference>
<reference key="2">
    <citation type="journal article" date="1998" name="Nature">
        <title>Deciphering the biology of Mycobacterium tuberculosis from the complete genome sequence.</title>
        <authorList>
            <person name="Cole S.T."/>
            <person name="Brosch R."/>
            <person name="Parkhill J."/>
            <person name="Garnier T."/>
            <person name="Churcher C.M."/>
            <person name="Harris D.E."/>
            <person name="Gordon S.V."/>
            <person name="Eiglmeier K."/>
            <person name="Gas S."/>
            <person name="Barry C.E. III"/>
            <person name="Tekaia F."/>
            <person name="Badcock K."/>
            <person name="Basham D."/>
            <person name="Brown D."/>
            <person name="Chillingworth T."/>
            <person name="Connor R."/>
            <person name="Davies R.M."/>
            <person name="Devlin K."/>
            <person name="Feltwell T."/>
            <person name="Gentles S."/>
            <person name="Hamlin N."/>
            <person name="Holroyd S."/>
            <person name="Hornsby T."/>
            <person name="Jagels K."/>
            <person name="Krogh A."/>
            <person name="McLean J."/>
            <person name="Moule S."/>
            <person name="Murphy L.D."/>
            <person name="Oliver S."/>
            <person name="Osborne J."/>
            <person name="Quail M.A."/>
            <person name="Rajandream M.A."/>
            <person name="Rogers J."/>
            <person name="Rutter S."/>
            <person name="Seeger K."/>
            <person name="Skelton S."/>
            <person name="Squares S."/>
            <person name="Squares R."/>
            <person name="Sulston J.E."/>
            <person name="Taylor K."/>
            <person name="Whitehead S."/>
            <person name="Barrell B.G."/>
        </authorList>
    </citation>
    <scope>NUCLEOTIDE SEQUENCE [LARGE SCALE GENOMIC DNA]</scope>
    <source>
        <strain>ATCC 25618 / H37Rv</strain>
    </source>
</reference>
<reference key="3">
    <citation type="journal article" date="2004" name="J. Biol. Chem.">
        <title>Characterization of three glycosyltransferases involved in the biosynthesis of the phenolic glycolipid antigens from the Mycobacterium tuberculosis complex.</title>
        <authorList>
            <person name="Perez E."/>
            <person name="Constant P."/>
            <person name="Lemassu A."/>
            <person name="Laval F."/>
            <person name="Daffe M."/>
            <person name="Guilhot C."/>
        </authorList>
    </citation>
    <scope>FUNCTION AS GLYCOSYLTRANSFERASE</scope>
    <source>
        <strain>ATCC 25618 / H37Rv</strain>
    </source>
</reference>
<reference key="4">
    <citation type="journal article" date="2008" name="BMC Syst. Biol.">
        <title>targetTB: a target identification pipeline for Mycobacterium tuberculosis through an interactome, reactome and genome-scale structural analysis.</title>
        <authorList>
            <person name="Raman K."/>
            <person name="Yeturu K."/>
            <person name="Chandra N."/>
        </authorList>
    </citation>
    <scope>IDENTIFICATION AS A DRUG TARGET [LARGE SCALE ANALYSIS]</scope>
</reference>
<reference key="5">
    <citation type="journal article" date="2011" name="Mol. Cell. Proteomics">
        <title>Proteogenomic analysis of Mycobacterium tuberculosis by high resolution mass spectrometry.</title>
        <authorList>
            <person name="Kelkar D.S."/>
            <person name="Kumar D."/>
            <person name="Kumar P."/>
            <person name="Balakrishnan L."/>
            <person name="Muthusamy B."/>
            <person name="Yadav A.K."/>
            <person name="Shrivastava P."/>
            <person name="Marimuthu A."/>
            <person name="Anand S."/>
            <person name="Sundaram H."/>
            <person name="Kingsbury R."/>
            <person name="Harsha H.C."/>
            <person name="Nair B."/>
            <person name="Prasad T.S."/>
            <person name="Chauhan D.S."/>
            <person name="Katoch K."/>
            <person name="Katoch V.M."/>
            <person name="Kumar P."/>
            <person name="Chaerkady R."/>
            <person name="Ramachandran S."/>
            <person name="Dash D."/>
            <person name="Pandey A."/>
        </authorList>
    </citation>
    <scope>IDENTIFICATION BY MASS SPECTROMETRY [LARGE SCALE ANALYSIS]</scope>
    <source>
        <strain>ATCC 25618 / H37Rv</strain>
    </source>
</reference>
<evidence type="ECO:0000269" key="1">
    <source>
    </source>
</evidence>
<evidence type="ECO:0000305" key="2"/>